<comment type="function">
    <text evidence="1">RuBisCO catalyzes two reactions: the carboxylation of D-ribulose 1,5-bisphosphate, the primary event in carbon dioxide fixation, as well as the oxidative fragmentation of the pentose substrate in the photorespiration process. Both reactions occur simultaneously and in competition at the same active site.</text>
</comment>
<comment type="catalytic activity">
    <reaction evidence="1">
        <text>2 (2R)-3-phosphoglycerate + 2 H(+) = D-ribulose 1,5-bisphosphate + CO2 + H2O</text>
        <dbReference type="Rhea" id="RHEA:23124"/>
        <dbReference type="ChEBI" id="CHEBI:15377"/>
        <dbReference type="ChEBI" id="CHEBI:15378"/>
        <dbReference type="ChEBI" id="CHEBI:16526"/>
        <dbReference type="ChEBI" id="CHEBI:57870"/>
        <dbReference type="ChEBI" id="CHEBI:58272"/>
        <dbReference type="EC" id="4.1.1.39"/>
    </reaction>
</comment>
<comment type="catalytic activity">
    <reaction evidence="1">
        <text>D-ribulose 1,5-bisphosphate + O2 = 2-phosphoglycolate + (2R)-3-phosphoglycerate + 2 H(+)</text>
        <dbReference type="Rhea" id="RHEA:36631"/>
        <dbReference type="ChEBI" id="CHEBI:15378"/>
        <dbReference type="ChEBI" id="CHEBI:15379"/>
        <dbReference type="ChEBI" id="CHEBI:57870"/>
        <dbReference type="ChEBI" id="CHEBI:58033"/>
        <dbReference type="ChEBI" id="CHEBI:58272"/>
    </reaction>
</comment>
<comment type="cofactor">
    <cofactor evidence="1">
        <name>Mg(2+)</name>
        <dbReference type="ChEBI" id="CHEBI:18420"/>
    </cofactor>
    <text evidence="1">Binds 1 Mg(2+) ion per subunit.</text>
</comment>
<comment type="subunit">
    <text evidence="1 3">Heterohexadecamer of 8 large chains and 8 small chains. Forms a CsoS2-CsoS1-RuBisCO complex (Probable).</text>
</comment>
<comment type="subcellular location">
    <subcellularLocation>
        <location evidence="1 3">Carboxysome</location>
    </subcellularLocation>
    <text evidence="2">This bacterium makes alpha-type carboxysomes.</text>
</comment>
<comment type="miscellaneous">
    <text evidence="1">The basic functional RuBisCO is composed of a large chain homodimer in a 'head-to-tail' conformation. In form I RuBisCO this homodimer is arranged in a barrel-like tetramer with the small subunits forming a tetrameric 'cap' on each end of the 'barrel'.</text>
</comment>
<comment type="similarity">
    <text evidence="1">Belongs to the RuBisCO large chain family. Type I subfamily.</text>
</comment>
<proteinExistence type="evidence at protein level"/>
<feature type="chain" id="PRO_0000062638" description="Ribulose bisphosphate carboxylase large chain">
    <location>
        <begin position="1"/>
        <end position="470"/>
    </location>
</feature>
<feature type="active site" description="Proton acceptor" evidence="1">
    <location>
        <position position="167"/>
    </location>
</feature>
<feature type="active site" description="Proton acceptor" evidence="1">
    <location>
        <position position="286"/>
    </location>
</feature>
<feature type="binding site" description="in homodimeric partner" evidence="1">
    <location>
        <position position="115"/>
    </location>
    <ligand>
        <name>substrate</name>
    </ligand>
</feature>
<feature type="binding site" evidence="1">
    <location>
        <position position="165"/>
    </location>
    <ligand>
        <name>substrate</name>
    </ligand>
</feature>
<feature type="binding site" evidence="1">
    <location>
        <position position="169"/>
    </location>
    <ligand>
        <name>substrate</name>
    </ligand>
</feature>
<feature type="binding site" description="via carbamate group" evidence="1">
    <location>
        <position position="193"/>
    </location>
    <ligand>
        <name>Mg(2+)</name>
        <dbReference type="ChEBI" id="CHEBI:18420"/>
    </ligand>
</feature>
<feature type="binding site" evidence="1">
    <location>
        <position position="195"/>
    </location>
    <ligand>
        <name>Mg(2+)</name>
        <dbReference type="ChEBI" id="CHEBI:18420"/>
    </ligand>
</feature>
<feature type="binding site" evidence="1">
    <location>
        <position position="196"/>
    </location>
    <ligand>
        <name>Mg(2+)</name>
        <dbReference type="ChEBI" id="CHEBI:18420"/>
    </ligand>
</feature>
<feature type="binding site" evidence="1">
    <location>
        <position position="287"/>
    </location>
    <ligand>
        <name>substrate</name>
    </ligand>
</feature>
<feature type="binding site" evidence="1">
    <location>
        <position position="319"/>
    </location>
    <ligand>
        <name>substrate</name>
    </ligand>
</feature>
<feature type="binding site" evidence="1">
    <location>
        <position position="371"/>
    </location>
    <ligand>
        <name>substrate</name>
    </ligand>
</feature>
<feature type="site" description="Transition state stabilizer" evidence="1">
    <location>
        <position position="326"/>
    </location>
</feature>
<feature type="modified residue" description="N6-carboxylysine" evidence="1">
    <location>
        <position position="193"/>
    </location>
</feature>
<reference key="1">
    <citation type="journal article" date="2003" name="Nature">
        <title>Genome divergence in two Prochlorococcus ecotypes reflects oceanic niche differentiation.</title>
        <authorList>
            <person name="Rocap G."/>
            <person name="Larimer F.W."/>
            <person name="Lamerdin J.E."/>
            <person name="Malfatti S."/>
            <person name="Chain P."/>
            <person name="Ahlgren N.A."/>
            <person name="Arellano A."/>
            <person name="Coleman M."/>
            <person name="Hauser L."/>
            <person name="Hess W.R."/>
            <person name="Johnson Z.I."/>
            <person name="Land M.L."/>
            <person name="Lindell D."/>
            <person name="Post A.F."/>
            <person name="Regala W."/>
            <person name="Shah M."/>
            <person name="Shaw S.L."/>
            <person name="Steglich C."/>
            <person name="Sullivan M.B."/>
            <person name="Ting C.S."/>
            <person name="Tolonen A."/>
            <person name="Webb E.A."/>
            <person name="Zinser E.R."/>
            <person name="Chisholm S.W."/>
        </authorList>
    </citation>
    <scope>NUCLEOTIDE SEQUENCE [LARGE SCALE GENOMIC DNA]</scope>
    <source>
        <strain>MIT 9313</strain>
    </source>
</reference>
<reference key="2">
    <citation type="journal article" date="2015" name="Life">
        <title>Advances in Understanding Carboxysome Assembly in Prochlorococcus and Synechococcus Implicate CsoS2 as a Critical Component.</title>
        <authorList>
            <person name="Cai F."/>
            <person name="Dou Z."/>
            <person name="Bernstein S.L."/>
            <person name="Leverenz R."/>
            <person name="Williams E.B."/>
            <person name="Heinhorst S."/>
            <person name="Shively J."/>
            <person name="Cannon G.C."/>
            <person name="Kerfeld C.A."/>
        </authorList>
    </citation>
    <scope>SUBUNIT</scope>
    <source>
        <strain>MIT 9313</strain>
    </source>
</reference>
<keyword id="KW-1283">Bacterial microcompartment</keyword>
<keyword id="KW-0113">Calvin cycle</keyword>
<keyword id="KW-0120">Carbon dioxide fixation</keyword>
<keyword id="KW-1282">Carboxysome</keyword>
<keyword id="KW-0456">Lyase</keyword>
<keyword id="KW-0460">Magnesium</keyword>
<keyword id="KW-0479">Metal-binding</keyword>
<keyword id="KW-0503">Monooxygenase</keyword>
<keyword id="KW-0560">Oxidoreductase</keyword>
<keyword id="KW-0601">Photorespiration</keyword>
<keyword id="KW-0602">Photosynthesis</keyword>
<keyword id="KW-1185">Reference proteome</keyword>
<protein>
    <recommendedName>
        <fullName evidence="1">Ribulose bisphosphate carboxylase large chain</fullName>
        <shortName evidence="1">RuBisCO large subunit</shortName>
        <ecNumber evidence="1">4.1.1.39</ecNumber>
    </recommendedName>
</protein>
<accession>Q7V6F8</accession>
<organism>
    <name type="scientific">Prochlorococcus marinus (strain MIT 9313)</name>
    <dbReference type="NCBI Taxonomy" id="74547"/>
    <lineage>
        <taxon>Bacteria</taxon>
        <taxon>Bacillati</taxon>
        <taxon>Cyanobacteriota</taxon>
        <taxon>Cyanophyceae</taxon>
        <taxon>Synechococcales</taxon>
        <taxon>Prochlorococcaceae</taxon>
        <taxon>Prochlorococcus</taxon>
    </lineage>
</organism>
<dbReference type="EC" id="4.1.1.39" evidence="1"/>
<dbReference type="EMBL" id="BX548175">
    <property type="protein sequence ID" value="CAE21380.1"/>
    <property type="molecule type" value="Genomic_DNA"/>
</dbReference>
<dbReference type="RefSeq" id="WP_011130576.1">
    <property type="nucleotide sequence ID" value="NC_005071.1"/>
</dbReference>
<dbReference type="SMR" id="Q7V6F8"/>
<dbReference type="KEGG" id="pmt:PMT_1205"/>
<dbReference type="eggNOG" id="COG1850">
    <property type="taxonomic scope" value="Bacteria"/>
</dbReference>
<dbReference type="HOGENOM" id="CLU_031450_2_0_3"/>
<dbReference type="OrthoDB" id="9770811at2"/>
<dbReference type="Proteomes" id="UP000001423">
    <property type="component" value="Chromosome"/>
</dbReference>
<dbReference type="GO" id="GO:0031470">
    <property type="term" value="C:carboxysome"/>
    <property type="evidence" value="ECO:0007669"/>
    <property type="project" value="UniProtKB-SubCell"/>
</dbReference>
<dbReference type="GO" id="GO:0000287">
    <property type="term" value="F:magnesium ion binding"/>
    <property type="evidence" value="ECO:0007669"/>
    <property type="project" value="UniProtKB-UniRule"/>
</dbReference>
<dbReference type="GO" id="GO:0004497">
    <property type="term" value="F:monooxygenase activity"/>
    <property type="evidence" value="ECO:0007669"/>
    <property type="project" value="UniProtKB-KW"/>
</dbReference>
<dbReference type="GO" id="GO:0016984">
    <property type="term" value="F:ribulose-bisphosphate carboxylase activity"/>
    <property type="evidence" value="ECO:0007669"/>
    <property type="project" value="UniProtKB-UniRule"/>
</dbReference>
<dbReference type="GO" id="GO:0009853">
    <property type="term" value="P:photorespiration"/>
    <property type="evidence" value="ECO:0007669"/>
    <property type="project" value="UniProtKB-KW"/>
</dbReference>
<dbReference type="GO" id="GO:0019253">
    <property type="term" value="P:reductive pentose-phosphate cycle"/>
    <property type="evidence" value="ECO:0007669"/>
    <property type="project" value="UniProtKB-UniRule"/>
</dbReference>
<dbReference type="Gene3D" id="3.20.20.110">
    <property type="entry name" value="Ribulose bisphosphate carboxylase, large subunit, C-terminal domain"/>
    <property type="match status" value="1"/>
</dbReference>
<dbReference type="Gene3D" id="3.30.70.150">
    <property type="entry name" value="RuBisCO large subunit, N-terminal domain"/>
    <property type="match status" value="1"/>
</dbReference>
<dbReference type="HAMAP" id="MF_01338">
    <property type="entry name" value="RuBisCO_L_type1"/>
    <property type="match status" value="1"/>
</dbReference>
<dbReference type="InterPro" id="IPR033966">
    <property type="entry name" value="RuBisCO"/>
</dbReference>
<dbReference type="InterPro" id="IPR000685">
    <property type="entry name" value="RuBisCO_lsu_C"/>
</dbReference>
<dbReference type="InterPro" id="IPR036376">
    <property type="entry name" value="RuBisCO_lsu_C_sf"/>
</dbReference>
<dbReference type="InterPro" id="IPR017443">
    <property type="entry name" value="RuBisCO_lsu_fd_N"/>
</dbReference>
<dbReference type="InterPro" id="IPR036422">
    <property type="entry name" value="RuBisCO_lsu_N_sf"/>
</dbReference>
<dbReference type="InterPro" id="IPR020888">
    <property type="entry name" value="RuBisCO_lsuI"/>
</dbReference>
<dbReference type="NCBIfam" id="NF003252">
    <property type="entry name" value="PRK04208.1"/>
    <property type="match status" value="1"/>
</dbReference>
<dbReference type="PANTHER" id="PTHR42704">
    <property type="entry name" value="RIBULOSE BISPHOSPHATE CARBOXYLASE"/>
    <property type="match status" value="1"/>
</dbReference>
<dbReference type="PANTHER" id="PTHR42704:SF17">
    <property type="entry name" value="RIBULOSE BISPHOSPHATE CARBOXYLASE LARGE CHAIN"/>
    <property type="match status" value="1"/>
</dbReference>
<dbReference type="Pfam" id="PF00016">
    <property type="entry name" value="RuBisCO_large"/>
    <property type="match status" value="1"/>
</dbReference>
<dbReference type="Pfam" id="PF02788">
    <property type="entry name" value="RuBisCO_large_N"/>
    <property type="match status" value="1"/>
</dbReference>
<dbReference type="SFLD" id="SFLDG01052">
    <property type="entry name" value="RuBisCO"/>
    <property type="match status" value="1"/>
</dbReference>
<dbReference type="SFLD" id="SFLDS00014">
    <property type="entry name" value="RuBisCO"/>
    <property type="match status" value="1"/>
</dbReference>
<dbReference type="SFLD" id="SFLDG00301">
    <property type="entry name" value="RuBisCO-like_proteins"/>
    <property type="match status" value="1"/>
</dbReference>
<dbReference type="SUPFAM" id="SSF51649">
    <property type="entry name" value="RuBisCo, C-terminal domain"/>
    <property type="match status" value="1"/>
</dbReference>
<dbReference type="SUPFAM" id="SSF54966">
    <property type="entry name" value="RuBisCO, large subunit, small (N-terminal) domain"/>
    <property type="match status" value="1"/>
</dbReference>
<sequence length="470" mass="52573">MSKKYDAGVKEYRDTYWTPDYVPLDTDLLACFKCTGQEGVPREEVAAAVAAESSTGTWSTVWSELLTDLEFYKGRCYRIEDVPGDKESFYAFIAYPLDLFEEGSITNVLTSLVGNVFGFKALRHLRLEDIRFPMAFIKTCGGPPNGIVVERDRLNKYGRPLLGCTIKPKLGLSGKNYGRVVYECLRGGLDLTKDDENINSQPFQRWRERFEFVAEAVKLAQQETGEVKGHYLNCTATTPEEMYERAEFAKELDMPIIMHDYITGGFTANTGLANWCRKNGMLLHIHRAMHAVIDRHPKHGIHFRVLAKCLRLSGGDQLHTGTVVGKLEGDRQTTLGYIDNLRESFVPEDRSRGNFFDQDWGSMPGVFAVASGGIHVWHMPALLAIFGDDSCLQFGGGTHGHPWGSAAGAAANRVALEACVKARNAGREIEKESRDILMEAAKHSPELAIALETWKEIKFEFDTVDKLDVQ</sequence>
<name>RBL_PROMM</name>
<gene>
    <name evidence="1" type="primary">cbbL</name>
    <name evidence="1" type="synonym">rbcL</name>
    <name type="ordered locus">PMT_1205</name>
</gene>
<evidence type="ECO:0000255" key="1">
    <source>
        <dbReference type="HAMAP-Rule" id="MF_01338"/>
    </source>
</evidence>
<evidence type="ECO:0000269" key="2">
    <source>
    </source>
</evidence>
<evidence type="ECO:0000305" key="3">
    <source>
    </source>
</evidence>